<name>EF1A_AURPU</name>
<feature type="initiator methionine" description="Removed" evidence="2">
    <location>
        <position position="1"/>
    </location>
</feature>
<feature type="chain" id="PRO_0000090954" description="Elongation factor 1-alpha">
    <location>
        <begin position="2"/>
        <end position="459"/>
    </location>
</feature>
<feature type="domain" description="tr-type G">
    <location>
        <begin position="5"/>
        <end position="239"/>
    </location>
</feature>
<feature type="region of interest" description="G1" evidence="1">
    <location>
        <begin position="14"/>
        <end position="21"/>
    </location>
</feature>
<feature type="region of interest" description="G2" evidence="1">
    <location>
        <begin position="70"/>
        <end position="74"/>
    </location>
</feature>
<feature type="region of interest" description="G3" evidence="1">
    <location>
        <begin position="91"/>
        <end position="94"/>
    </location>
</feature>
<feature type="region of interest" description="G4" evidence="1">
    <location>
        <begin position="153"/>
        <end position="156"/>
    </location>
</feature>
<feature type="region of interest" description="G5" evidence="1">
    <location>
        <begin position="192"/>
        <end position="194"/>
    </location>
</feature>
<feature type="binding site" evidence="1">
    <location>
        <begin position="14"/>
        <end position="21"/>
    </location>
    <ligand>
        <name>GTP</name>
        <dbReference type="ChEBI" id="CHEBI:37565"/>
    </ligand>
</feature>
<feature type="binding site" evidence="1">
    <location>
        <begin position="91"/>
        <end position="95"/>
    </location>
    <ligand>
        <name>GTP</name>
        <dbReference type="ChEBI" id="CHEBI:37565"/>
    </ligand>
</feature>
<feature type="binding site" evidence="1">
    <location>
        <begin position="153"/>
        <end position="156"/>
    </location>
    <ligand>
        <name>GTP</name>
        <dbReference type="ChEBI" id="CHEBI:37565"/>
    </ligand>
</feature>
<feature type="modified residue" description="N,N,N-trimethylglycine" evidence="2">
    <location>
        <position position="2"/>
    </location>
</feature>
<feature type="modified residue" description="N6,N6-dimethyllysine; alternate" evidence="2">
    <location>
        <position position="3"/>
    </location>
</feature>
<feature type="modified residue" description="N6-methyllysine; alternate" evidence="2">
    <location>
        <position position="3"/>
    </location>
</feature>
<feature type="modified residue" description="N6-methyllysine" evidence="2">
    <location>
        <position position="30"/>
    </location>
</feature>
<feature type="modified residue" description="N6,N6,N6-trimethyllysine" evidence="2">
    <location>
        <position position="79"/>
    </location>
</feature>
<feature type="modified residue" description="N6,N6-dimethyllysine; alternate" evidence="2">
    <location>
        <position position="315"/>
    </location>
</feature>
<feature type="modified residue" description="N6-methyllysine; alternate" evidence="2">
    <location>
        <position position="315"/>
    </location>
</feature>
<feature type="modified residue" description="N6-methyllysine" evidence="2">
    <location>
        <position position="389"/>
    </location>
</feature>
<reference key="1">
    <citation type="journal article" date="1995" name="Gene">
        <title>Cloning and characterization of the gene encoding translation elongation factor 1 alpha from Aureobasidium pullulans.</title>
        <authorList>
            <person name="Thornewell S.J."/>
            <person name="Peery R.B."/>
            <person name="Skatrud P.L."/>
        </authorList>
    </citation>
    <scope>NUCLEOTIDE SEQUENCE [GENOMIC DNA]</scope>
    <source>
        <strain>R106</strain>
    </source>
</reference>
<organism>
    <name type="scientific">Aureobasidium pullulans</name>
    <name type="common">Black yeast</name>
    <name type="synonym">Pullularia pullulans</name>
    <dbReference type="NCBI Taxonomy" id="5580"/>
    <lineage>
        <taxon>Eukaryota</taxon>
        <taxon>Fungi</taxon>
        <taxon>Dikarya</taxon>
        <taxon>Ascomycota</taxon>
        <taxon>Pezizomycotina</taxon>
        <taxon>Dothideomycetes</taxon>
        <taxon>Dothideomycetidae</taxon>
        <taxon>Dothideales</taxon>
        <taxon>Saccotheciaceae</taxon>
        <taxon>Aureobasidium</taxon>
    </lineage>
</organism>
<protein>
    <recommendedName>
        <fullName>Elongation factor 1-alpha</fullName>
        <shortName>EF-1-alpha</shortName>
    </recommendedName>
</protein>
<comment type="function">
    <text>This protein promotes the GTP-dependent binding of aminoacyl-tRNA to the A-site of ribosomes during protein biosynthesis.</text>
</comment>
<comment type="subcellular location">
    <subcellularLocation>
        <location>Cytoplasm</location>
    </subcellularLocation>
</comment>
<comment type="similarity">
    <text evidence="3">Belongs to the TRAFAC class translation factor GTPase superfamily. Classic translation factor GTPase family. EF-Tu/EF-1A subfamily.</text>
</comment>
<accession>Q00251</accession>
<dbReference type="EMBL" id="U19723">
    <property type="protein sequence ID" value="AAA91636.1"/>
    <property type="molecule type" value="Genomic_DNA"/>
</dbReference>
<dbReference type="PIR" id="JC4253">
    <property type="entry name" value="JC4253"/>
</dbReference>
<dbReference type="SMR" id="Q00251"/>
<dbReference type="GO" id="GO:0005737">
    <property type="term" value="C:cytoplasm"/>
    <property type="evidence" value="ECO:0007669"/>
    <property type="project" value="UniProtKB-SubCell"/>
</dbReference>
<dbReference type="GO" id="GO:0005525">
    <property type="term" value="F:GTP binding"/>
    <property type="evidence" value="ECO:0007669"/>
    <property type="project" value="UniProtKB-KW"/>
</dbReference>
<dbReference type="GO" id="GO:0003924">
    <property type="term" value="F:GTPase activity"/>
    <property type="evidence" value="ECO:0007669"/>
    <property type="project" value="InterPro"/>
</dbReference>
<dbReference type="GO" id="GO:0003746">
    <property type="term" value="F:translation elongation factor activity"/>
    <property type="evidence" value="ECO:0007669"/>
    <property type="project" value="UniProtKB-KW"/>
</dbReference>
<dbReference type="CDD" id="cd01883">
    <property type="entry name" value="EF1_alpha"/>
    <property type="match status" value="1"/>
</dbReference>
<dbReference type="CDD" id="cd03693">
    <property type="entry name" value="EF1_alpha_II"/>
    <property type="match status" value="1"/>
</dbReference>
<dbReference type="CDD" id="cd03705">
    <property type="entry name" value="EF1_alpha_III"/>
    <property type="match status" value="1"/>
</dbReference>
<dbReference type="FunFam" id="2.40.30.10:FF:000003">
    <property type="entry name" value="Elongation factor 1-alpha"/>
    <property type="match status" value="1"/>
</dbReference>
<dbReference type="FunFam" id="2.40.30.10:FF:000005">
    <property type="entry name" value="Elongation factor 1-alpha"/>
    <property type="match status" value="1"/>
</dbReference>
<dbReference type="FunFam" id="3.40.50.300:FF:000211">
    <property type="entry name" value="Elongation factor 1-alpha"/>
    <property type="match status" value="1"/>
</dbReference>
<dbReference type="Gene3D" id="3.40.50.300">
    <property type="entry name" value="P-loop containing nucleotide triphosphate hydrolases"/>
    <property type="match status" value="1"/>
</dbReference>
<dbReference type="Gene3D" id="2.40.30.10">
    <property type="entry name" value="Translation factors"/>
    <property type="match status" value="2"/>
</dbReference>
<dbReference type="HAMAP" id="MF_00118_A">
    <property type="entry name" value="EF_Tu_A"/>
    <property type="match status" value="1"/>
</dbReference>
<dbReference type="InterPro" id="IPR004161">
    <property type="entry name" value="EFTu-like_2"/>
</dbReference>
<dbReference type="InterPro" id="IPR031157">
    <property type="entry name" value="G_TR_CS"/>
</dbReference>
<dbReference type="InterPro" id="IPR054696">
    <property type="entry name" value="GTP-eEF1A_C"/>
</dbReference>
<dbReference type="InterPro" id="IPR027417">
    <property type="entry name" value="P-loop_NTPase"/>
</dbReference>
<dbReference type="InterPro" id="IPR000795">
    <property type="entry name" value="T_Tr_GTP-bd_dom"/>
</dbReference>
<dbReference type="InterPro" id="IPR050100">
    <property type="entry name" value="TRAFAC_GTPase_members"/>
</dbReference>
<dbReference type="InterPro" id="IPR009000">
    <property type="entry name" value="Transl_B-barrel_sf"/>
</dbReference>
<dbReference type="InterPro" id="IPR009001">
    <property type="entry name" value="Transl_elong_EF1A/Init_IF2_C"/>
</dbReference>
<dbReference type="InterPro" id="IPR004539">
    <property type="entry name" value="Transl_elong_EF1A_euk/arc"/>
</dbReference>
<dbReference type="NCBIfam" id="TIGR00483">
    <property type="entry name" value="EF-1_alpha"/>
    <property type="match status" value="1"/>
</dbReference>
<dbReference type="NCBIfam" id="NF008969">
    <property type="entry name" value="PRK12317.1"/>
    <property type="match status" value="1"/>
</dbReference>
<dbReference type="PANTHER" id="PTHR23115">
    <property type="entry name" value="TRANSLATION FACTOR"/>
    <property type="match status" value="1"/>
</dbReference>
<dbReference type="Pfam" id="PF22594">
    <property type="entry name" value="GTP-eEF1A_C"/>
    <property type="match status" value="1"/>
</dbReference>
<dbReference type="Pfam" id="PF00009">
    <property type="entry name" value="GTP_EFTU"/>
    <property type="match status" value="1"/>
</dbReference>
<dbReference type="Pfam" id="PF03144">
    <property type="entry name" value="GTP_EFTU_D2"/>
    <property type="match status" value="1"/>
</dbReference>
<dbReference type="PRINTS" id="PR00315">
    <property type="entry name" value="ELONGATNFCT"/>
</dbReference>
<dbReference type="SUPFAM" id="SSF50465">
    <property type="entry name" value="EF-Tu/eEF-1alpha/eIF2-gamma C-terminal domain"/>
    <property type="match status" value="1"/>
</dbReference>
<dbReference type="SUPFAM" id="SSF52540">
    <property type="entry name" value="P-loop containing nucleoside triphosphate hydrolases"/>
    <property type="match status" value="1"/>
</dbReference>
<dbReference type="SUPFAM" id="SSF50447">
    <property type="entry name" value="Translation proteins"/>
    <property type="match status" value="1"/>
</dbReference>
<dbReference type="PROSITE" id="PS00301">
    <property type="entry name" value="G_TR_1"/>
    <property type="match status" value="1"/>
</dbReference>
<dbReference type="PROSITE" id="PS51722">
    <property type="entry name" value="G_TR_2"/>
    <property type="match status" value="1"/>
</dbReference>
<gene>
    <name type="primary">TEF1</name>
</gene>
<proteinExistence type="inferred from homology"/>
<keyword id="KW-0963">Cytoplasm</keyword>
<keyword id="KW-0251">Elongation factor</keyword>
<keyword id="KW-0342">GTP-binding</keyword>
<keyword id="KW-0488">Methylation</keyword>
<keyword id="KW-0547">Nucleotide-binding</keyword>
<keyword id="KW-0648">Protein biosynthesis</keyword>
<evidence type="ECO:0000250" key="1"/>
<evidence type="ECO:0000250" key="2">
    <source>
        <dbReference type="UniProtKB" id="P02994"/>
    </source>
</evidence>
<evidence type="ECO:0000305" key="3"/>
<sequence length="459" mass="49663">MGKEKSHINVVVIGHVDSGKSTTTGHLIYKCGGIDKRTIEKFEKEAAELGKGSFKYAWVLDKLKSERERGITIDIALWKFETPKYMVTVIDAPGHRDFIKNMITGTSQADCAILIIAAGTGEFEAGISKDGQTREHALLAYTLGVKQLIVAINKMDTTKWSEARYQEIIKETSGFIKKVGYNPKHVPFVPISGFNGDNMIEVSSNCPWYKGWEKETKAKATGKTLLEAIDAIDPPSRPTDKPLRLPLQDVYKIGGIGTVPVGRVETGTIKGGMVVTFAPAGVTTEVKSVEMHHEQLSEGLPGDNVGFNVKNVSVKEIRRGNVAGDSKNDPPKGCDSFNAQVIVLNHPGQVGAGYAPVLDCHTAHIACKFSELVEKIDRRTGKSVEAAPKFIKSGDAAIVKMVPSKPMCVEAFTDYPPLGRFAVRDMRQTVAVGVIKSVAKSDKQGAGKVTKAAVKAGKK</sequence>